<comment type="function">
    <text evidence="3">Methylates (mono- and asymmetric dimethylation) the guanidino nitrogens of arginyl residues in proteins. May methylate histone H3 at 'Arg-17' and activate transcription via chromatin remodeling (By similarity).</text>
</comment>
<comment type="catalytic activity">
    <reaction evidence="3">
        <text>L-arginyl-[protein] + 2 S-adenosyl-L-methionine = N(omega),N(omega)-dimethyl-L-arginyl-[protein] + 2 S-adenosyl-L-homocysteine + 2 H(+)</text>
        <dbReference type="Rhea" id="RHEA:48096"/>
        <dbReference type="Rhea" id="RHEA-COMP:10532"/>
        <dbReference type="Rhea" id="RHEA-COMP:11991"/>
        <dbReference type="ChEBI" id="CHEBI:15378"/>
        <dbReference type="ChEBI" id="CHEBI:29965"/>
        <dbReference type="ChEBI" id="CHEBI:57856"/>
        <dbReference type="ChEBI" id="CHEBI:59789"/>
        <dbReference type="ChEBI" id="CHEBI:61897"/>
        <dbReference type="EC" id="2.1.1.319"/>
    </reaction>
</comment>
<comment type="subunit">
    <text evidence="1">Homodimer.</text>
</comment>
<comment type="subcellular location">
    <subcellularLocation>
        <location evidence="4">Cytoplasm</location>
    </subcellularLocation>
    <subcellularLocation>
        <location evidence="4">Nucleus</location>
    </subcellularLocation>
</comment>
<comment type="PTM">
    <text evidence="1">The dimethylated protein is the major form.</text>
</comment>
<comment type="similarity">
    <text evidence="5">Belongs to the class I-like SAM-binding methyltransferase superfamily. Protein arginine N-methyltransferase family.</text>
</comment>
<protein>
    <recommendedName>
        <fullName evidence="3">Histone-arginine methyltransferase CARMER</fullName>
        <ecNumber evidence="3">2.1.1.319</ecNumber>
    </recommendedName>
</protein>
<dbReference type="EC" id="2.1.1.319" evidence="3"/>
<dbReference type="EMBL" id="CH940650">
    <property type="protein sequence ID" value="EDW67533.1"/>
    <property type="molecule type" value="Genomic_DNA"/>
</dbReference>
<dbReference type="RefSeq" id="XP_002054013.1">
    <property type="nucleotide sequence ID" value="XM_002053977.4"/>
</dbReference>
<dbReference type="SMR" id="B4LVS8"/>
<dbReference type="FunCoup" id="B4LVS8">
    <property type="interactions" value="2362"/>
</dbReference>
<dbReference type="STRING" id="7244.B4LVS8"/>
<dbReference type="EnsemblMetazoa" id="FBtr0240127">
    <property type="protein sequence ID" value="FBpp0238619"/>
    <property type="gene ID" value="FBgn0211285"/>
</dbReference>
<dbReference type="EnsemblMetazoa" id="XM_002053977.3">
    <property type="protein sequence ID" value="XP_002054013.1"/>
    <property type="gene ID" value="LOC6630512"/>
</dbReference>
<dbReference type="GeneID" id="6630512"/>
<dbReference type="KEGG" id="dvi:6630512"/>
<dbReference type="CTD" id="420"/>
<dbReference type="eggNOG" id="KOG1500">
    <property type="taxonomic scope" value="Eukaryota"/>
</dbReference>
<dbReference type="HOGENOM" id="CLU_017375_0_1_1"/>
<dbReference type="InParanoid" id="B4LVS8"/>
<dbReference type="OMA" id="GIGDGMD"/>
<dbReference type="OrthoDB" id="7848332at2759"/>
<dbReference type="PhylomeDB" id="B4LVS8"/>
<dbReference type="Proteomes" id="UP000008792">
    <property type="component" value="Unassembled WGS sequence"/>
</dbReference>
<dbReference type="GO" id="GO:0005737">
    <property type="term" value="C:cytoplasm"/>
    <property type="evidence" value="ECO:0000250"/>
    <property type="project" value="UniProtKB"/>
</dbReference>
<dbReference type="GO" id="GO:0005829">
    <property type="term" value="C:cytosol"/>
    <property type="evidence" value="ECO:0007669"/>
    <property type="project" value="EnsemblMetazoa"/>
</dbReference>
<dbReference type="GO" id="GO:0035097">
    <property type="term" value="C:histone methyltransferase complex"/>
    <property type="evidence" value="ECO:0007669"/>
    <property type="project" value="EnsemblMetazoa"/>
</dbReference>
<dbReference type="GO" id="GO:0005634">
    <property type="term" value="C:nucleus"/>
    <property type="evidence" value="ECO:0000250"/>
    <property type="project" value="UniProtKB"/>
</dbReference>
<dbReference type="GO" id="GO:0035642">
    <property type="term" value="F:histone H3R17 methyltransferase activity"/>
    <property type="evidence" value="ECO:0000250"/>
    <property type="project" value="UniProtKB"/>
</dbReference>
<dbReference type="GO" id="GO:0070611">
    <property type="term" value="F:histone H3R2 methyltransferase activity"/>
    <property type="evidence" value="ECO:0000250"/>
    <property type="project" value="UniProtKB"/>
</dbReference>
<dbReference type="GO" id="GO:0140903">
    <property type="term" value="F:histone H3R26 methyltransferase activity"/>
    <property type="evidence" value="ECO:0000250"/>
    <property type="project" value="UniProtKB"/>
</dbReference>
<dbReference type="GO" id="GO:0035242">
    <property type="term" value="F:protein-arginine omega-N asymmetric methyltransferase activity"/>
    <property type="evidence" value="ECO:0000250"/>
    <property type="project" value="UniProtKB"/>
</dbReference>
<dbReference type="GO" id="GO:0035241">
    <property type="term" value="F:protein-arginine omega-N monomethyltransferase activity"/>
    <property type="evidence" value="ECO:0000250"/>
    <property type="project" value="UniProtKB"/>
</dbReference>
<dbReference type="GO" id="GO:0006338">
    <property type="term" value="P:chromatin remodeling"/>
    <property type="evidence" value="ECO:0000250"/>
    <property type="project" value="UniProtKB"/>
</dbReference>
<dbReference type="GO" id="GO:0019919">
    <property type="term" value="P:peptidyl-arginine methylation, to asymmetrical-dimethyl arginine"/>
    <property type="evidence" value="ECO:0000250"/>
    <property type="project" value="UniProtKB"/>
</dbReference>
<dbReference type="GO" id="GO:0120142">
    <property type="term" value="P:positive regulation of ecdysone receptor signaling pathway"/>
    <property type="evidence" value="ECO:0007669"/>
    <property type="project" value="EnsemblMetazoa"/>
</dbReference>
<dbReference type="GO" id="GO:0045944">
    <property type="term" value="P:positive regulation of transcription by RNA polymerase II"/>
    <property type="evidence" value="ECO:0007669"/>
    <property type="project" value="EnsemblMetazoa"/>
</dbReference>
<dbReference type="GO" id="GO:0006355">
    <property type="term" value="P:regulation of DNA-templated transcription"/>
    <property type="evidence" value="ECO:0000250"/>
    <property type="project" value="UniProtKB"/>
</dbReference>
<dbReference type="CDD" id="cd02440">
    <property type="entry name" value="AdoMet_MTases"/>
    <property type="match status" value="1"/>
</dbReference>
<dbReference type="FunFam" id="2.70.160.11:FF:000002">
    <property type="entry name" value="Probable histone-arginine methyltransferase CARM1"/>
    <property type="match status" value="1"/>
</dbReference>
<dbReference type="FunFam" id="3.40.50.150:FF:000031">
    <property type="entry name" value="Putative Histone-arginine methyltransferase CARM1"/>
    <property type="match status" value="1"/>
</dbReference>
<dbReference type="Gene3D" id="2.70.160.11">
    <property type="entry name" value="Hnrnp arginine n-methyltransferase1"/>
    <property type="match status" value="1"/>
</dbReference>
<dbReference type="Gene3D" id="2.30.29.30">
    <property type="entry name" value="Pleckstrin-homology domain (PH domain)/Phosphotyrosine-binding domain (PTB)"/>
    <property type="match status" value="1"/>
</dbReference>
<dbReference type="Gene3D" id="3.40.50.150">
    <property type="entry name" value="Vaccinia Virus protein VP39"/>
    <property type="match status" value="1"/>
</dbReference>
<dbReference type="InterPro" id="IPR025799">
    <property type="entry name" value="Arg_MeTrfase"/>
</dbReference>
<dbReference type="InterPro" id="IPR011993">
    <property type="entry name" value="PH-like_dom_sf"/>
</dbReference>
<dbReference type="InterPro" id="IPR055135">
    <property type="entry name" value="PRMT_dom"/>
</dbReference>
<dbReference type="InterPro" id="IPR029063">
    <property type="entry name" value="SAM-dependent_MTases_sf"/>
</dbReference>
<dbReference type="PANTHER" id="PTHR11006:SF10">
    <property type="entry name" value="HISTONE-ARGININE METHYLTRANSFERASE CARMER-RELATED"/>
    <property type="match status" value="1"/>
</dbReference>
<dbReference type="PANTHER" id="PTHR11006">
    <property type="entry name" value="PROTEIN ARGININE N-METHYLTRANSFERASE"/>
    <property type="match status" value="1"/>
</dbReference>
<dbReference type="Pfam" id="PF06325">
    <property type="entry name" value="PrmA"/>
    <property type="match status" value="1"/>
</dbReference>
<dbReference type="Pfam" id="PF22528">
    <property type="entry name" value="PRMT_C"/>
    <property type="match status" value="1"/>
</dbReference>
<dbReference type="SUPFAM" id="SSF53335">
    <property type="entry name" value="S-adenosyl-L-methionine-dependent methyltransferases"/>
    <property type="match status" value="1"/>
</dbReference>
<dbReference type="PROSITE" id="PS51678">
    <property type="entry name" value="SAM_MT_PRMT"/>
    <property type="match status" value="1"/>
</dbReference>
<keyword id="KW-0156">Chromatin regulator</keyword>
<keyword id="KW-0963">Cytoplasm</keyword>
<keyword id="KW-0488">Methylation</keyword>
<keyword id="KW-0489">Methyltransferase</keyword>
<keyword id="KW-0539">Nucleus</keyword>
<keyword id="KW-1185">Reference proteome</keyword>
<keyword id="KW-0949">S-adenosyl-L-methionine</keyword>
<keyword id="KW-0804">Transcription</keyword>
<keyword id="KW-0805">Transcription regulation</keyword>
<keyword id="KW-0808">Transferase</keyword>
<accession>B4LVS8</accession>
<evidence type="ECO:0000250" key="1"/>
<evidence type="ECO:0000250" key="2">
    <source>
        <dbReference type="UniProtKB" id="Q63009"/>
    </source>
</evidence>
<evidence type="ECO:0000250" key="3">
    <source>
        <dbReference type="UniProtKB" id="Q7Q2B7"/>
    </source>
</evidence>
<evidence type="ECO:0000250" key="4">
    <source>
        <dbReference type="UniProtKB" id="Q9VH48"/>
    </source>
</evidence>
<evidence type="ECO:0000255" key="5">
    <source>
        <dbReference type="PROSITE-ProRule" id="PRU01015"/>
    </source>
</evidence>
<evidence type="ECO:0000312" key="6">
    <source>
        <dbReference type="EMBL" id="EDW67533.1"/>
    </source>
</evidence>
<organism>
    <name type="scientific">Drosophila virilis</name>
    <name type="common">Fruit fly</name>
    <dbReference type="NCBI Taxonomy" id="7244"/>
    <lineage>
        <taxon>Eukaryota</taxon>
        <taxon>Metazoa</taxon>
        <taxon>Ecdysozoa</taxon>
        <taxon>Arthropoda</taxon>
        <taxon>Hexapoda</taxon>
        <taxon>Insecta</taxon>
        <taxon>Pterygota</taxon>
        <taxon>Neoptera</taxon>
        <taxon>Endopterygota</taxon>
        <taxon>Diptera</taxon>
        <taxon>Brachycera</taxon>
        <taxon>Muscomorpha</taxon>
        <taxon>Ephydroidea</taxon>
        <taxon>Drosophilidae</taxon>
        <taxon>Drosophila</taxon>
    </lineage>
</organism>
<feature type="chain" id="PRO_0000382229" description="Histone-arginine methyltransferase CARMER">
    <location>
        <begin position="1"/>
        <end position="538"/>
    </location>
</feature>
<feature type="domain" description="SAM-dependent MTase PRMT-type" evidence="5">
    <location>
        <begin position="148"/>
        <end position="457"/>
    </location>
</feature>
<feature type="binding site" evidence="2">
    <location>
        <position position="161"/>
    </location>
    <ligand>
        <name>S-adenosyl-L-methionine</name>
        <dbReference type="ChEBI" id="CHEBI:59789"/>
    </ligand>
</feature>
<feature type="binding site" evidence="2">
    <location>
        <position position="170"/>
    </location>
    <ligand>
        <name>S-adenosyl-L-methionine</name>
        <dbReference type="ChEBI" id="CHEBI:59789"/>
    </ligand>
</feature>
<feature type="binding site" evidence="2">
    <location>
        <position position="194"/>
    </location>
    <ligand>
        <name>S-adenosyl-L-methionine</name>
        <dbReference type="ChEBI" id="CHEBI:59789"/>
    </ligand>
</feature>
<feature type="binding site" evidence="2">
    <location>
        <position position="216"/>
    </location>
    <ligand>
        <name>S-adenosyl-L-methionine</name>
        <dbReference type="ChEBI" id="CHEBI:59789"/>
    </ligand>
</feature>
<feature type="binding site" evidence="2">
    <location>
        <position position="245"/>
    </location>
    <ligand>
        <name>S-adenosyl-L-methionine</name>
        <dbReference type="ChEBI" id="CHEBI:59789"/>
    </ligand>
</feature>
<feature type="binding site" evidence="1">
    <location>
        <position position="273"/>
    </location>
    <ligand>
        <name>S-adenosyl-L-methionine</name>
        <dbReference type="ChEBI" id="CHEBI:59789"/>
    </ligand>
</feature>
<feature type="modified residue" description="Asymmetric dimethylarginine; by autocatalysis" evidence="3">
    <location>
        <position position="508"/>
    </location>
</feature>
<reference evidence="6" key="1">
    <citation type="journal article" date="2007" name="Nature">
        <title>Evolution of genes and genomes on the Drosophila phylogeny.</title>
        <authorList>
            <consortium name="Drosophila 12 genomes consortium"/>
        </authorList>
    </citation>
    <scope>NUCLEOTIDE SEQUENCE [LARGE SCALE GENOMIC DNA]</scope>
    <source>
        <strain evidence="6">Tucson 15010-1051.87</strain>
    </source>
</reference>
<proteinExistence type="inferred from homology"/>
<sequence>MSTSSSSRIAIEQNNKCVNSVAAALCPLSNCQFSGVVISAISDEQKLEFNSIYKSSCTLSCSYDSQGVLLRIMLDNDQGHVLKEYMISADTDAAQLGRRCYAVSLESDNLVLRFGSDKDQQLFRKVVENVKHLRPKSVFSQRTEESSASQYFQFYGYLSQQQNMMQDYVRTSTYQRAILGNSIDFQDKIVLDVGAGSGILSFFAVQAGAAKVYAIEASNMAQYAQQLVESNNVQHKISVIPGKIEEIELPEKVDVIISEPMGYMLYNERMLETYLHARKWLKPHGKMYPTHGDLHIAPFSDESLYSEQYNKANFWYQSAFHGVDLTTLHKEGMKEYFRQPIVDTFDIRICMAKSVRHVCDFLNDKEDDLHVIDIPLEFHILQTGICHGLAFWFDVEFSGSSQNVWLSTSPTAPLTHWYQVRCLLPMPIFIKQGQTLTGRVLLEANRRQSYDVTIDLHIEGTLISSSNTLDLKNPYFRYTGAPVQAPPGTNTQSPSEQYWTQMDTQGNRNSNSMLNGALTVNGMGDGGMDITHGLMHPH</sequence>
<gene>
    <name type="primary">Art4</name>
    <name type="ORF">GJ24202</name>
</gene>
<name>CARM1_DROVI</name>